<comment type="function">
    <text evidence="1">Catalyzes the transfer of a ribosyl phosphate group from 5-phosphoribose 1-diphosphate to orotate, leading to the formation of orotidine monophosphate (OMP).</text>
</comment>
<comment type="catalytic activity">
    <reaction evidence="1">
        <text>orotidine 5'-phosphate + diphosphate = orotate + 5-phospho-alpha-D-ribose 1-diphosphate</text>
        <dbReference type="Rhea" id="RHEA:10380"/>
        <dbReference type="ChEBI" id="CHEBI:30839"/>
        <dbReference type="ChEBI" id="CHEBI:33019"/>
        <dbReference type="ChEBI" id="CHEBI:57538"/>
        <dbReference type="ChEBI" id="CHEBI:58017"/>
        <dbReference type="EC" id="2.4.2.10"/>
    </reaction>
</comment>
<comment type="cofactor">
    <cofactor evidence="1">
        <name>Mg(2+)</name>
        <dbReference type="ChEBI" id="CHEBI:18420"/>
    </cofactor>
</comment>
<comment type="pathway">
    <text evidence="1">Pyrimidine metabolism; UMP biosynthesis via de novo pathway; UMP from orotate: step 1/2.</text>
</comment>
<comment type="subunit">
    <text evidence="1">Homodimer.</text>
</comment>
<comment type="similarity">
    <text evidence="1">Belongs to the purine/pyrimidine phosphoribosyltransferase family. PyrE subfamily.</text>
</comment>
<evidence type="ECO:0000255" key="1">
    <source>
        <dbReference type="HAMAP-Rule" id="MF_01208"/>
    </source>
</evidence>
<name>PYRE_FUSNN</name>
<reference key="1">
    <citation type="journal article" date="2002" name="J. Bacteriol.">
        <title>Genome sequence and analysis of the oral bacterium Fusobacterium nucleatum strain ATCC 25586.</title>
        <authorList>
            <person name="Kapatral V."/>
            <person name="Anderson I."/>
            <person name="Ivanova N."/>
            <person name="Reznik G."/>
            <person name="Los T."/>
            <person name="Lykidis A."/>
            <person name="Bhattacharyya A."/>
            <person name="Bartman A."/>
            <person name="Gardner W."/>
            <person name="Grechkin G."/>
            <person name="Zhu L."/>
            <person name="Vasieva O."/>
            <person name="Chu L."/>
            <person name="Kogan Y."/>
            <person name="Chaga O."/>
            <person name="Goltsman E."/>
            <person name="Bernal A."/>
            <person name="Larsen N."/>
            <person name="D'Souza M."/>
            <person name="Walunas T."/>
            <person name="Pusch G."/>
            <person name="Haselkorn R."/>
            <person name="Fonstein M."/>
            <person name="Kyrpides N.C."/>
            <person name="Overbeek R."/>
        </authorList>
    </citation>
    <scope>NUCLEOTIDE SEQUENCE [LARGE SCALE GENOMIC DNA]</scope>
    <source>
        <strain>ATCC 25586 / DSM 15643 / BCRC 10681 / CIP 101130 / JCM 8532 / KCTC 2640 / LMG 13131 / VPI 4355</strain>
    </source>
</reference>
<keyword id="KW-0328">Glycosyltransferase</keyword>
<keyword id="KW-0460">Magnesium</keyword>
<keyword id="KW-0665">Pyrimidine biosynthesis</keyword>
<keyword id="KW-1185">Reference proteome</keyword>
<keyword id="KW-0808">Transferase</keyword>
<sequence length="211" mass="23776">MKWGINMLNREIINALLDIKAVELRVDKENWFTWASGIKSPIYCDNRLTMSYPKIRKQIAEGFVKKINELYPNVDYIVGTATAGIPHAAWISDIMDLPMLYVRGSAKDHGKTNQIEGKFEKGKKVVVIEDLISTGKSSVLAAQALQEEGLEVLGVIAIFSYNLNKAKEKFDEAKIPFSTLTNYDVLLELAKETGLIGDKENQILIDWRNNL</sequence>
<organism>
    <name type="scientific">Fusobacterium nucleatum subsp. nucleatum (strain ATCC 25586 / DSM 15643 / BCRC 10681 / CIP 101130 / JCM 8532 / KCTC 2640 / LMG 13131 / VPI 4355)</name>
    <dbReference type="NCBI Taxonomy" id="190304"/>
    <lineage>
        <taxon>Bacteria</taxon>
        <taxon>Fusobacteriati</taxon>
        <taxon>Fusobacteriota</taxon>
        <taxon>Fusobacteriia</taxon>
        <taxon>Fusobacteriales</taxon>
        <taxon>Fusobacteriaceae</taxon>
        <taxon>Fusobacterium</taxon>
    </lineage>
</organism>
<dbReference type="EC" id="2.4.2.10" evidence="1"/>
<dbReference type="EMBL" id="AE009951">
    <property type="protein sequence ID" value="AAL94630.1"/>
    <property type="molecule type" value="Genomic_DNA"/>
</dbReference>
<dbReference type="RefSeq" id="NP_603331.1">
    <property type="nucleotide sequence ID" value="NC_003454.1"/>
</dbReference>
<dbReference type="SMR" id="P58856"/>
<dbReference type="FunCoup" id="P58856">
    <property type="interactions" value="145"/>
</dbReference>
<dbReference type="STRING" id="190304.FN0427"/>
<dbReference type="PaxDb" id="190304-FN0427"/>
<dbReference type="EnsemblBacteria" id="AAL94630">
    <property type="protein sequence ID" value="AAL94630"/>
    <property type="gene ID" value="FN0427"/>
</dbReference>
<dbReference type="KEGG" id="fnu:FN0427"/>
<dbReference type="PATRIC" id="fig|190304.8.peg.1004"/>
<dbReference type="eggNOG" id="COG0461">
    <property type="taxonomic scope" value="Bacteria"/>
</dbReference>
<dbReference type="HOGENOM" id="CLU_074878_1_1_0"/>
<dbReference type="InParanoid" id="P58856"/>
<dbReference type="BioCyc" id="FNUC190304:G1FZS-1021-MONOMER"/>
<dbReference type="UniPathway" id="UPA00070">
    <property type="reaction ID" value="UER00119"/>
</dbReference>
<dbReference type="Proteomes" id="UP000002521">
    <property type="component" value="Chromosome"/>
</dbReference>
<dbReference type="GO" id="GO:0000287">
    <property type="term" value="F:magnesium ion binding"/>
    <property type="evidence" value="ECO:0007669"/>
    <property type="project" value="UniProtKB-UniRule"/>
</dbReference>
<dbReference type="GO" id="GO:0004588">
    <property type="term" value="F:orotate phosphoribosyltransferase activity"/>
    <property type="evidence" value="ECO:0000318"/>
    <property type="project" value="GO_Central"/>
</dbReference>
<dbReference type="GO" id="GO:0044205">
    <property type="term" value="P:'de novo' UMP biosynthetic process"/>
    <property type="evidence" value="ECO:0007669"/>
    <property type="project" value="UniProtKB-UniRule"/>
</dbReference>
<dbReference type="GO" id="GO:0019856">
    <property type="term" value="P:pyrimidine nucleobase biosynthetic process"/>
    <property type="evidence" value="ECO:0000318"/>
    <property type="project" value="GO_Central"/>
</dbReference>
<dbReference type="GO" id="GO:0006222">
    <property type="term" value="P:UMP biosynthetic process"/>
    <property type="evidence" value="ECO:0000318"/>
    <property type="project" value="GO_Central"/>
</dbReference>
<dbReference type="CDD" id="cd06223">
    <property type="entry name" value="PRTases_typeI"/>
    <property type="match status" value="1"/>
</dbReference>
<dbReference type="Gene3D" id="3.40.50.2020">
    <property type="match status" value="1"/>
</dbReference>
<dbReference type="HAMAP" id="MF_01208">
    <property type="entry name" value="PyrE"/>
    <property type="match status" value="1"/>
</dbReference>
<dbReference type="InterPro" id="IPR023031">
    <property type="entry name" value="OPRT"/>
</dbReference>
<dbReference type="InterPro" id="IPR004467">
    <property type="entry name" value="Or_phspho_trans_dom"/>
</dbReference>
<dbReference type="InterPro" id="IPR000836">
    <property type="entry name" value="PRibTrfase_dom"/>
</dbReference>
<dbReference type="InterPro" id="IPR029057">
    <property type="entry name" value="PRTase-like"/>
</dbReference>
<dbReference type="NCBIfam" id="TIGR00336">
    <property type="entry name" value="pyrE"/>
    <property type="match status" value="1"/>
</dbReference>
<dbReference type="PANTHER" id="PTHR19278">
    <property type="entry name" value="OROTATE PHOSPHORIBOSYLTRANSFERASE"/>
    <property type="match status" value="1"/>
</dbReference>
<dbReference type="PANTHER" id="PTHR19278:SF9">
    <property type="entry name" value="URIDINE 5'-MONOPHOSPHATE SYNTHASE"/>
    <property type="match status" value="1"/>
</dbReference>
<dbReference type="Pfam" id="PF00156">
    <property type="entry name" value="Pribosyltran"/>
    <property type="match status" value="1"/>
</dbReference>
<dbReference type="SUPFAM" id="SSF53271">
    <property type="entry name" value="PRTase-like"/>
    <property type="match status" value="1"/>
</dbReference>
<dbReference type="PROSITE" id="PS00103">
    <property type="entry name" value="PUR_PYR_PR_TRANSFER"/>
    <property type="match status" value="1"/>
</dbReference>
<feature type="chain" id="PRO_0000110698" description="Orotate phosphoribosyltransferase">
    <location>
        <begin position="1"/>
        <end position="211"/>
    </location>
</feature>
<feature type="binding site" evidence="1">
    <location>
        <position position="103"/>
    </location>
    <ligand>
        <name>5-phospho-alpha-D-ribose 1-diphosphate</name>
        <dbReference type="ChEBI" id="CHEBI:58017"/>
        <note>ligand shared between dimeric partners</note>
    </ligand>
</feature>
<feature type="binding site" evidence="1">
    <location>
        <position position="107"/>
    </location>
    <ligand>
        <name>5-phospho-alpha-D-ribose 1-diphosphate</name>
        <dbReference type="ChEBI" id="CHEBI:58017"/>
        <note>ligand shared between dimeric partners</note>
    </ligand>
</feature>
<feature type="binding site" evidence="1">
    <location>
        <position position="109"/>
    </location>
    <ligand>
        <name>5-phospho-alpha-D-ribose 1-diphosphate</name>
        <dbReference type="ChEBI" id="CHEBI:58017"/>
        <note>ligand shared between dimeric partners</note>
    </ligand>
</feature>
<feature type="binding site" description="in other chain" evidence="1">
    <location>
        <begin position="129"/>
        <end position="137"/>
    </location>
    <ligand>
        <name>5-phospho-alpha-D-ribose 1-diphosphate</name>
        <dbReference type="ChEBI" id="CHEBI:58017"/>
        <note>ligand shared between dimeric partners</note>
    </ligand>
</feature>
<feature type="binding site" evidence="1">
    <location>
        <position position="133"/>
    </location>
    <ligand>
        <name>orotate</name>
        <dbReference type="ChEBI" id="CHEBI:30839"/>
    </ligand>
</feature>
<gene>
    <name evidence="1" type="primary">pyrE</name>
    <name type="ordered locus">FN0427</name>
</gene>
<accession>P58856</accession>
<protein>
    <recommendedName>
        <fullName evidence="1">Orotate phosphoribosyltransferase</fullName>
        <shortName evidence="1">OPRT</shortName>
        <shortName evidence="1">OPRTase</shortName>
        <ecNumber evidence="1">2.4.2.10</ecNumber>
    </recommendedName>
</protein>
<proteinExistence type="inferred from homology"/>